<dbReference type="EC" id="5.6.1.7" evidence="1"/>
<dbReference type="EMBL" id="AP009324">
    <property type="protein sequence ID" value="BAF78897.1"/>
    <property type="molecule type" value="Genomic_DNA"/>
</dbReference>
<dbReference type="RefSeq" id="WP_000240642.1">
    <property type="nucleotide sequence ID" value="NC_009782.1"/>
</dbReference>
<dbReference type="SMR" id="A7X4J1"/>
<dbReference type="KEGG" id="saw:SAHV_2014"/>
<dbReference type="HOGENOM" id="CLU_016503_3_0_9"/>
<dbReference type="GO" id="GO:0005737">
    <property type="term" value="C:cytoplasm"/>
    <property type="evidence" value="ECO:0007669"/>
    <property type="project" value="UniProtKB-SubCell"/>
</dbReference>
<dbReference type="GO" id="GO:0005524">
    <property type="term" value="F:ATP binding"/>
    <property type="evidence" value="ECO:0007669"/>
    <property type="project" value="UniProtKB-UniRule"/>
</dbReference>
<dbReference type="GO" id="GO:0140662">
    <property type="term" value="F:ATP-dependent protein folding chaperone"/>
    <property type="evidence" value="ECO:0007669"/>
    <property type="project" value="InterPro"/>
</dbReference>
<dbReference type="GO" id="GO:0016853">
    <property type="term" value="F:isomerase activity"/>
    <property type="evidence" value="ECO:0007669"/>
    <property type="project" value="UniProtKB-KW"/>
</dbReference>
<dbReference type="GO" id="GO:0051082">
    <property type="term" value="F:unfolded protein binding"/>
    <property type="evidence" value="ECO:0007669"/>
    <property type="project" value="UniProtKB-UniRule"/>
</dbReference>
<dbReference type="GO" id="GO:0042026">
    <property type="term" value="P:protein refolding"/>
    <property type="evidence" value="ECO:0007669"/>
    <property type="project" value="UniProtKB-UniRule"/>
</dbReference>
<dbReference type="CDD" id="cd03344">
    <property type="entry name" value="GroEL"/>
    <property type="match status" value="1"/>
</dbReference>
<dbReference type="FunFam" id="1.10.560.10:FF:000001">
    <property type="entry name" value="60 kDa chaperonin"/>
    <property type="match status" value="1"/>
</dbReference>
<dbReference type="FunFam" id="3.50.7.10:FF:000001">
    <property type="entry name" value="60 kDa chaperonin"/>
    <property type="match status" value="1"/>
</dbReference>
<dbReference type="Gene3D" id="3.50.7.10">
    <property type="entry name" value="GroEL"/>
    <property type="match status" value="1"/>
</dbReference>
<dbReference type="Gene3D" id="1.10.560.10">
    <property type="entry name" value="GroEL-like equatorial domain"/>
    <property type="match status" value="1"/>
</dbReference>
<dbReference type="Gene3D" id="3.30.260.10">
    <property type="entry name" value="TCP-1-like chaperonin intermediate domain"/>
    <property type="match status" value="1"/>
</dbReference>
<dbReference type="HAMAP" id="MF_00600">
    <property type="entry name" value="CH60"/>
    <property type="match status" value="1"/>
</dbReference>
<dbReference type="InterPro" id="IPR018370">
    <property type="entry name" value="Chaperonin_Cpn60_CS"/>
</dbReference>
<dbReference type="InterPro" id="IPR001844">
    <property type="entry name" value="Cpn60/GroEL"/>
</dbReference>
<dbReference type="InterPro" id="IPR002423">
    <property type="entry name" value="Cpn60/GroEL/TCP-1"/>
</dbReference>
<dbReference type="InterPro" id="IPR027409">
    <property type="entry name" value="GroEL-like_apical_dom_sf"/>
</dbReference>
<dbReference type="InterPro" id="IPR027413">
    <property type="entry name" value="GROEL-like_equatorial_sf"/>
</dbReference>
<dbReference type="InterPro" id="IPR027410">
    <property type="entry name" value="TCP-1-like_intermed_sf"/>
</dbReference>
<dbReference type="NCBIfam" id="TIGR02348">
    <property type="entry name" value="GroEL"/>
    <property type="match status" value="1"/>
</dbReference>
<dbReference type="NCBIfam" id="NF000592">
    <property type="entry name" value="PRK00013.1"/>
    <property type="match status" value="1"/>
</dbReference>
<dbReference type="NCBIfam" id="NF009487">
    <property type="entry name" value="PRK12849.1"/>
    <property type="match status" value="1"/>
</dbReference>
<dbReference type="NCBIfam" id="NF009488">
    <property type="entry name" value="PRK12850.1"/>
    <property type="match status" value="1"/>
</dbReference>
<dbReference type="NCBIfam" id="NF009489">
    <property type="entry name" value="PRK12851.1"/>
    <property type="match status" value="1"/>
</dbReference>
<dbReference type="PANTHER" id="PTHR45633">
    <property type="entry name" value="60 KDA HEAT SHOCK PROTEIN, MITOCHONDRIAL"/>
    <property type="match status" value="1"/>
</dbReference>
<dbReference type="Pfam" id="PF00118">
    <property type="entry name" value="Cpn60_TCP1"/>
    <property type="match status" value="1"/>
</dbReference>
<dbReference type="PRINTS" id="PR00298">
    <property type="entry name" value="CHAPERONIN60"/>
</dbReference>
<dbReference type="SUPFAM" id="SSF52029">
    <property type="entry name" value="GroEL apical domain-like"/>
    <property type="match status" value="1"/>
</dbReference>
<dbReference type="SUPFAM" id="SSF48592">
    <property type="entry name" value="GroEL equatorial domain-like"/>
    <property type="match status" value="1"/>
</dbReference>
<dbReference type="SUPFAM" id="SSF54849">
    <property type="entry name" value="GroEL-intermediate domain like"/>
    <property type="match status" value="1"/>
</dbReference>
<dbReference type="PROSITE" id="PS00296">
    <property type="entry name" value="CHAPERONINS_CPN60"/>
    <property type="match status" value="1"/>
</dbReference>
<sequence length="538" mass="57572">MVKQLKFSEDARQAMLRGVDQLANAVKVTIGPKGRNVVLDKEFTAPLITNDGVTIAKEIELEDPYENMGAKLVQEVANKTNEIAGDGTTTATVLAQAMIQEGLKNVTSGANPVGLRQGIDKAVKVAVEALHENSQKVENKNEIAQVGAISAADEEIGRYISEAMEKVGNDGVITIEESNGLNTELEVVEGMQFDRGYQSPYMVTDSDKMVAELERPYILVTDKKISSFQDILPLLEQVVQSNRPILIVADEVEGDALTNIVLNRMRGTFTAVAVKAPGFGDRRKAMLEDLAILTGAQVITDDLGLDLKDASIDMLGTASKVEVTKDNTTVVDGDGDENSIDARVSQLKSQIEETESDFDREKLQERLAKLAGGVAVIKVGAASETELKERKLRIEDALNSTRAAVEEGIVAGGGTALVNVYQKVSEIEAEGDIETGVNIVLKALTAPVRQIAENAGLEGSVIVERLKNAEPGVGFNAATNEWVNMLEAGIVDPTKVTRSALQHAASVAAMFLTTEAVVASIPEKNNDQPNMGGMPGMM</sequence>
<keyword id="KW-0067">ATP-binding</keyword>
<keyword id="KW-0143">Chaperone</keyword>
<keyword id="KW-0963">Cytoplasm</keyword>
<keyword id="KW-0413">Isomerase</keyword>
<keyword id="KW-0547">Nucleotide-binding</keyword>
<protein>
    <recommendedName>
        <fullName evidence="1">Chaperonin GroEL</fullName>
        <ecNumber evidence="1">5.6.1.7</ecNumber>
    </recommendedName>
    <alternativeName>
        <fullName evidence="1">60 kDa chaperonin</fullName>
    </alternativeName>
    <alternativeName>
        <fullName evidence="1">Chaperonin-60</fullName>
        <shortName evidence="1">Cpn60</shortName>
    </alternativeName>
</protein>
<organism>
    <name type="scientific">Staphylococcus aureus (strain Mu3 / ATCC 700698)</name>
    <dbReference type="NCBI Taxonomy" id="418127"/>
    <lineage>
        <taxon>Bacteria</taxon>
        <taxon>Bacillati</taxon>
        <taxon>Bacillota</taxon>
        <taxon>Bacilli</taxon>
        <taxon>Bacillales</taxon>
        <taxon>Staphylococcaceae</taxon>
        <taxon>Staphylococcus</taxon>
    </lineage>
</organism>
<feature type="chain" id="PRO_1000025837" description="Chaperonin GroEL">
    <location>
        <begin position="1"/>
        <end position="538"/>
    </location>
</feature>
<feature type="binding site" evidence="1">
    <location>
        <begin position="29"/>
        <end position="32"/>
    </location>
    <ligand>
        <name>ATP</name>
        <dbReference type="ChEBI" id="CHEBI:30616"/>
    </ligand>
</feature>
<feature type="binding site" evidence="1">
    <location>
        <begin position="86"/>
        <end position="90"/>
    </location>
    <ligand>
        <name>ATP</name>
        <dbReference type="ChEBI" id="CHEBI:30616"/>
    </ligand>
</feature>
<feature type="binding site" evidence="1">
    <location>
        <position position="413"/>
    </location>
    <ligand>
        <name>ATP</name>
        <dbReference type="ChEBI" id="CHEBI:30616"/>
    </ligand>
</feature>
<feature type="binding site" evidence="1">
    <location>
        <begin position="476"/>
        <end position="478"/>
    </location>
    <ligand>
        <name>ATP</name>
        <dbReference type="ChEBI" id="CHEBI:30616"/>
    </ligand>
</feature>
<feature type="binding site" evidence="1">
    <location>
        <position position="492"/>
    </location>
    <ligand>
        <name>ATP</name>
        <dbReference type="ChEBI" id="CHEBI:30616"/>
    </ligand>
</feature>
<proteinExistence type="inferred from homology"/>
<evidence type="ECO:0000255" key="1">
    <source>
        <dbReference type="HAMAP-Rule" id="MF_00600"/>
    </source>
</evidence>
<gene>
    <name evidence="1" type="primary">groEL</name>
    <name evidence="1" type="synonym">groL</name>
    <name type="ordered locus">SAHV_2014</name>
</gene>
<reference key="1">
    <citation type="journal article" date="2008" name="Antimicrob. Agents Chemother.">
        <title>Mutated response regulator graR is responsible for phenotypic conversion of Staphylococcus aureus from heterogeneous vancomycin-intermediate resistance to vancomycin-intermediate resistance.</title>
        <authorList>
            <person name="Neoh H.-M."/>
            <person name="Cui L."/>
            <person name="Yuzawa H."/>
            <person name="Takeuchi F."/>
            <person name="Matsuo M."/>
            <person name="Hiramatsu K."/>
        </authorList>
    </citation>
    <scope>NUCLEOTIDE SEQUENCE [LARGE SCALE GENOMIC DNA]</scope>
    <source>
        <strain>Mu3 / ATCC 700698</strain>
    </source>
</reference>
<accession>A7X4J1</accession>
<comment type="function">
    <text evidence="1">Together with its co-chaperonin GroES, plays an essential role in assisting protein folding. The GroEL-GroES system forms a nano-cage that allows encapsulation of the non-native substrate proteins and provides a physical environment optimized to promote and accelerate protein folding.</text>
</comment>
<comment type="catalytic activity">
    <reaction evidence="1">
        <text>ATP + H2O + a folded polypeptide = ADP + phosphate + an unfolded polypeptide.</text>
        <dbReference type="EC" id="5.6.1.7"/>
    </reaction>
</comment>
<comment type="subunit">
    <text evidence="1">Forms a cylinder of 14 subunits composed of two heptameric rings stacked back-to-back. Interacts with the co-chaperonin GroES.</text>
</comment>
<comment type="subcellular location">
    <subcellularLocation>
        <location evidence="1">Cytoplasm</location>
    </subcellularLocation>
</comment>
<comment type="similarity">
    <text evidence="1">Belongs to the chaperonin (HSP60) family.</text>
</comment>
<name>CH60_STAA1</name>